<feature type="chain" id="PRO_1000125355" description="Probable nicotinate-nucleotide adenylyltransferase">
    <location>
        <begin position="1"/>
        <end position="185"/>
    </location>
</feature>
<organism>
    <name type="scientific">Methylorubrum extorquens (strain PA1)</name>
    <name type="common">Methylobacterium extorquens</name>
    <dbReference type="NCBI Taxonomy" id="419610"/>
    <lineage>
        <taxon>Bacteria</taxon>
        <taxon>Pseudomonadati</taxon>
        <taxon>Pseudomonadota</taxon>
        <taxon>Alphaproteobacteria</taxon>
        <taxon>Hyphomicrobiales</taxon>
        <taxon>Methylobacteriaceae</taxon>
        <taxon>Methylorubrum</taxon>
    </lineage>
</organism>
<name>NADD_METEP</name>
<keyword id="KW-0067">ATP-binding</keyword>
<keyword id="KW-0520">NAD</keyword>
<keyword id="KW-0547">Nucleotide-binding</keyword>
<keyword id="KW-0548">Nucleotidyltransferase</keyword>
<keyword id="KW-0662">Pyridine nucleotide biosynthesis</keyword>
<keyword id="KW-0808">Transferase</keyword>
<dbReference type="EC" id="2.7.7.18" evidence="1"/>
<dbReference type="EMBL" id="CP000908">
    <property type="protein sequence ID" value="ABY31259.1"/>
    <property type="molecule type" value="Genomic_DNA"/>
</dbReference>
<dbReference type="SMR" id="A9W6Q3"/>
<dbReference type="KEGG" id="mex:Mext_2869"/>
<dbReference type="eggNOG" id="COG1057">
    <property type="taxonomic scope" value="Bacteria"/>
</dbReference>
<dbReference type="HOGENOM" id="CLU_069765_2_0_5"/>
<dbReference type="UniPathway" id="UPA00253">
    <property type="reaction ID" value="UER00332"/>
</dbReference>
<dbReference type="GO" id="GO:0005524">
    <property type="term" value="F:ATP binding"/>
    <property type="evidence" value="ECO:0007669"/>
    <property type="project" value="UniProtKB-KW"/>
</dbReference>
<dbReference type="GO" id="GO:0004515">
    <property type="term" value="F:nicotinate-nucleotide adenylyltransferase activity"/>
    <property type="evidence" value="ECO:0007669"/>
    <property type="project" value="UniProtKB-UniRule"/>
</dbReference>
<dbReference type="GO" id="GO:0009435">
    <property type="term" value="P:NAD biosynthetic process"/>
    <property type="evidence" value="ECO:0007669"/>
    <property type="project" value="UniProtKB-UniRule"/>
</dbReference>
<dbReference type="CDD" id="cd02165">
    <property type="entry name" value="NMNAT"/>
    <property type="match status" value="1"/>
</dbReference>
<dbReference type="Gene3D" id="3.40.50.620">
    <property type="entry name" value="HUPs"/>
    <property type="match status" value="1"/>
</dbReference>
<dbReference type="HAMAP" id="MF_00244">
    <property type="entry name" value="NaMN_adenylyltr"/>
    <property type="match status" value="1"/>
</dbReference>
<dbReference type="InterPro" id="IPR004821">
    <property type="entry name" value="Cyt_trans-like"/>
</dbReference>
<dbReference type="InterPro" id="IPR005248">
    <property type="entry name" value="NadD/NMNAT"/>
</dbReference>
<dbReference type="InterPro" id="IPR014729">
    <property type="entry name" value="Rossmann-like_a/b/a_fold"/>
</dbReference>
<dbReference type="NCBIfam" id="TIGR00482">
    <property type="entry name" value="nicotinate (nicotinamide) nucleotide adenylyltransferase"/>
    <property type="match status" value="1"/>
</dbReference>
<dbReference type="NCBIfam" id="NF000843">
    <property type="entry name" value="PRK00071.2-2"/>
    <property type="match status" value="1"/>
</dbReference>
<dbReference type="NCBIfam" id="NF000845">
    <property type="entry name" value="PRK00071.2-4"/>
    <property type="match status" value="1"/>
</dbReference>
<dbReference type="PANTHER" id="PTHR39321">
    <property type="entry name" value="NICOTINATE-NUCLEOTIDE ADENYLYLTRANSFERASE-RELATED"/>
    <property type="match status" value="1"/>
</dbReference>
<dbReference type="PANTHER" id="PTHR39321:SF3">
    <property type="entry name" value="PHOSPHOPANTETHEINE ADENYLYLTRANSFERASE"/>
    <property type="match status" value="1"/>
</dbReference>
<dbReference type="Pfam" id="PF01467">
    <property type="entry name" value="CTP_transf_like"/>
    <property type="match status" value="1"/>
</dbReference>
<dbReference type="SUPFAM" id="SSF52374">
    <property type="entry name" value="Nucleotidylyl transferase"/>
    <property type="match status" value="1"/>
</dbReference>
<evidence type="ECO:0000255" key="1">
    <source>
        <dbReference type="HAMAP-Rule" id="MF_00244"/>
    </source>
</evidence>
<comment type="function">
    <text evidence="1">Catalyzes the reversible adenylation of nicotinate mononucleotide (NaMN) to nicotinic acid adenine dinucleotide (NaAD).</text>
</comment>
<comment type="catalytic activity">
    <reaction evidence="1">
        <text>nicotinate beta-D-ribonucleotide + ATP + H(+) = deamido-NAD(+) + diphosphate</text>
        <dbReference type="Rhea" id="RHEA:22860"/>
        <dbReference type="ChEBI" id="CHEBI:15378"/>
        <dbReference type="ChEBI" id="CHEBI:30616"/>
        <dbReference type="ChEBI" id="CHEBI:33019"/>
        <dbReference type="ChEBI" id="CHEBI:57502"/>
        <dbReference type="ChEBI" id="CHEBI:58437"/>
        <dbReference type="EC" id="2.7.7.18"/>
    </reaction>
</comment>
<comment type="pathway">
    <text evidence="1">Cofactor biosynthesis; NAD(+) biosynthesis; deamido-NAD(+) from nicotinate D-ribonucleotide: step 1/1.</text>
</comment>
<comment type="similarity">
    <text evidence="1">Belongs to the NadD family.</text>
</comment>
<gene>
    <name evidence="1" type="primary">nadD</name>
    <name type="ordered locus">Mext_2869</name>
</gene>
<reference key="1">
    <citation type="submission" date="2007-12" db="EMBL/GenBank/DDBJ databases">
        <title>Complete sequence of Methylobacterium extorquens PA1.</title>
        <authorList>
            <consortium name="US DOE Joint Genome Institute"/>
            <person name="Copeland A."/>
            <person name="Lucas S."/>
            <person name="Lapidus A."/>
            <person name="Barry K."/>
            <person name="Glavina del Rio T."/>
            <person name="Dalin E."/>
            <person name="Tice H."/>
            <person name="Pitluck S."/>
            <person name="Saunders E."/>
            <person name="Brettin T."/>
            <person name="Bruce D."/>
            <person name="Detter J.C."/>
            <person name="Han C."/>
            <person name="Schmutz J."/>
            <person name="Larimer F."/>
            <person name="Land M."/>
            <person name="Hauser L."/>
            <person name="Kyrpides N."/>
            <person name="Kim E."/>
            <person name="Marx C."/>
            <person name="Richardson P."/>
        </authorList>
    </citation>
    <scope>NUCLEOTIDE SEQUENCE [LARGE SCALE GENOMIC DNA]</scope>
    <source>
        <strain>PA1</strain>
    </source>
</reference>
<accession>A9W6Q3</accession>
<proteinExistence type="inferred from homology"/>
<sequence length="185" mass="20491">MRIGLYGGSFNPAHAGHLHVSRTALRRLRLDRVWWLVTPGNPLKDHGVLAPLDERVAQARALATDPRIAVTGFEGGIGSRYTADTLRWLVRRQPALHFVWIMGADSLGTFHRWRRFDEILSLMPVAVIDRPGYTLTAPSARAAQAFASARIQEADAPTLAIRPTPAWTFLHGPRSALSSTALRTR</sequence>
<protein>
    <recommendedName>
        <fullName evidence="1">Probable nicotinate-nucleotide adenylyltransferase</fullName>
        <ecNumber evidence="1">2.7.7.18</ecNumber>
    </recommendedName>
    <alternativeName>
        <fullName evidence="1">Deamido-NAD(+) diphosphorylase</fullName>
    </alternativeName>
    <alternativeName>
        <fullName evidence="1">Deamido-NAD(+) pyrophosphorylase</fullName>
    </alternativeName>
    <alternativeName>
        <fullName evidence="1">Nicotinate mononucleotide adenylyltransferase</fullName>
        <shortName evidence="1">NaMN adenylyltransferase</shortName>
    </alternativeName>
</protein>